<gene>
    <name evidence="7" type="primary">Abcf2</name>
</gene>
<feature type="chain" id="PRO_0000093324" description="ATP-binding cassette sub-family F member 2">
    <location>
        <begin position="1"/>
        <end position="628"/>
    </location>
</feature>
<feature type="domain" description="ABC transporter 1" evidence="2">
    <location>
        <begin position="91"/>
        <end position="330"/>
    </location>
</feature>
<feature type="domain" description="ABC transporter 2" evidence="2">
    <location>
        <begin position="401"/>
        <end position="618"/>
    </location>
</feature>
<feature type="region of interest" description="Disordered" evidence="3">
    <location>
        <begin position="1"/>
        <end position="57"/>
    </location>
</feature>
<feature type="compositionally biased region" description="Basic and acidic residues" evidence="3">
    <location>
        <begin position="40"/>
        <end position="53"/>
    </location>
</feature>
<feature type="binding site" evidence="2">
    <location>
        <begin position="123"/>
        <end position="130"/>
    </location>
    <ligand>
        <name>ATP</name>
        <dbReference type="ChEBI" id="CHEBI:30616"/>
        <label>1</label>
    </ligand>
</feature>
<feature type="binding site" evidence="2">
    <location>
        <begin position="435"/>
        <end position="442"/>
    </location>
    <ligand>
        <name>ATP</name>
        <dbReference type="ChEBI" id="CHEBI:30616"/>
        <label>2</label>
    </ligand>
</feature>
<feature type="modified residue" description="Phosphothreonine" evidence="1">
    <location>
        <position position="223"/>
    </location>
</feature>
<feature type="modified residue" description="N6-acetyllysine" evidence="1">
    <location>
        <position position="309"/>
    </location>
</feature>
<feature type="modified residue" description="Phosphoserine" evidence="1">
    <location>
        <position position="517"/>
    </location>
</feature>
<feature type="sequence conflict" description="In Ref. 3; AAF31422." evidence="4" ref="3">
    <original>W</original>
    <variation>R</variation>
    <location>
        <position position="537"/>
    </location>
</feature>
<feature type="sequence conflict" description="In Ref. 3; AAF31422." evidence="4" ref="3">
    <original>R</original>
    <variation>I</variation>
    <location>
        <position position="579"/>
    </location>
</feature>
<keyword id="KW-0007">Acetylation</keyword>
<keyword id="KW-0067">ATP-binding</keyword>
<keyword id="KW-0547">Nucleotide-binding</keyword>
<keyword id="KW-0597">Phosphoprotein</keyword>
<keyword id="KW-1185">Reference proteome</keyword>
<keyword id="KW-0677">Repeat</keyword>
<dbReference type="EMBL" id="AK003005">
    <property type="protein sequence ID" value="BAC25016.1"/>
    <property type="molecule type" value="mRNA"/>
</dbReference>
<dbReference type="EMBL" id="AK087990">
    <property type="protein sequence ID" value="BAC40079.1"/>
    <property type="molecule type" value="mRNA"/>
</dbReference>
<dbReference type="EMBL" id="AK147937">
    <property type="protein sequence ID" value="BAE28242.1"/>
    <property type="molecule type" value="mRNA"/>
</dbReference>
<dbReference type="EMBL" id="AK151545">
    <property type="protein sequence ID" value="BAE30491.1"/>
    <property type="molecule type" value="mRNA"/>
</dbReference>
<dbReference type="EMBL" id="BC003300">
    <property type="protein sequence ID" value="AAH03300.1"/>
    <property type="molecule type" value="mRNA"/>
</dbReference>
<dbReference type="EMBL" id="AF213382">
    <property type="protein sequence ID" value="AAF31422.1"/>
    <property type="molecule type" value="mRNA"/>
</dbReference>
<dbReference type="CCDS" id="CCDS19125.1"/>
<dbReference type="RefSeq" id="NP_001177372.1">
    <property type="nucleotide sequence ID" value="NM_001190443.1"/>
</dbReference>
<dbReference type="RefSeq" id="NP_001346134.1">
    <property type="nucleotide sequence ID" value="NM_001359205.2"/>
</dbReference>
<dbReference type="RefSeq" id="NP_001415933.1">
    <property type="nucleotide sequence ID" value="NM_001429004.1"/>
</dbReference>
<dbReference type="RefSeq" id="NP_001415934.1">
    <property type="nucleotide sequence ID" value="NM_001429005.1"/>
</dbReference>
<dbReference type="RefSeq" id="NP_038881.1">
    <property type="nucleotide sequence ID" value="NM_013853.3"/>
</dbReference>
<dbReference type="RefSeq" id="XP_006535789.1">
    <property type="nucleotide sequence ID" value="XM_006535726.3"/>
</dbReference>
<dbReference type="RefSeq" id="XP_006535790.1">
    <property type="nucleotide sequence ID" value="XM_006535727.3"/>
</dbReference>
<dbReference type="SMR" id="Q99LE6"/>
<dbReference type="BioGRID" id="205214">
    <property type="interactions" value="23"/>
</dbReference>
<dbReference type="FunCoup" id="Q99LE6">
    <property type="interactions" value="3066"/>
</dbReference>
<dbReference type="IntAct" id="Q99LE6">
    <property type="interactions" value="2"/>
</dbReference>
<dbReference type="STRING" id="10090.ENSMUSP00000030795"/>
<dbReference type="GlyGen" id="Q99LE6">
    <property type="glycosylation" value="2 sites, 2 N-linked glycans (2 sites)"/>
</dbReference>
<dbReference type="iPTMnet" id="Q99LE6"/>
<dbReference type="PhosphoSitePlus" id="Q99LE6"/>
<dbReference type="PaxDb" id="10090-ENSMUSP00000030795"/>
<dbReference type="PeptideAtlas" id="Q99LE6"/>
<dbReference type="ProteomicsDB" id="285957"/>
<dbReference type="Pumba" id="Q99LE6"/>
<dbReference type="DNASU" id="27407"/>
<dbReference type="Ensembl" id="ENSMUST00000030795.10">
    <property type="protein sequence ID" value="ENSMUSP00000030795.9"/>
    <property type="gene ID" value="ENSMUSG00000028953.11"/>
</dbReference>
<dbReference type="GeneID" id="27407"/>
<dbReference type="KEGG" id="mmu:27407"/>
<dbReference type="UCSC" id="uc008wsb.2">
    <property type="organism name" value="mouse"/>
</dbReference>
<dbReference type="AGR" id="MGI:1351657"/>
<dbReference type="CTD" id="10061"/>
<dbReference type="MGI" id="MGI:1351657">
    <property type="gene designation" value="Abcf2"/>
</dbReference>
<dbReference type="VEuPathDB" id="HostDB:ENSMUSG00000028953"/>
<dbReference type="eggNOG" id="KOG0927">
    <property type="taxonomic scope" value="Eukaryota"/>
</dbReference>
<dbReference type="GeneTree" id="ENSGT00630000089910"/>
<dbReference type="HOGENOM" id="CLU_000604_36_6_1"/>
<dbReference type="InParanoid" id="Q99LE6"/>
<dbReference type="OMA" id="QYEGTML"/>
<dbReference type="OrthoDB" id="2110130at2759"/>
<dbReference type="PhylomeDB" id="Q99LE6"/>
<dbReference type="TreeFam" id="TF105208"/>
<dbReference type="BioGRID-ORCS" id="27407">
    <property type="hits" value="5 hits in 78 CRISPR screens"/>
</dbReference>
<dbReference type="ChiTaRS" id="Abcf2">
    <property type="organism name" value="mouse"/>
</dbReference>
<dbReference type="PRO" id="PR:Q99LE6"/>
<dbReference type="Proteomes" id="UP000000589">
    <property type="component" value="Chromosome 5"/>
</dbReference>
<dbReference type="RNAct" id="Q99LE6">
    <property type="molecule type" value="protein"/>
</dbReference>
<dbReference type="Bgee" id="ENSMUSG00000028953">
    <property type="expression patterns" value="Expressed in hindlimb stylopod muscle and 253 other cell types or tissues"/>
</dbReference>
<dbReference type="GO" id="GO:0005739">
    <property type="term" value="C:mitochondrion"/>
    <property type="evidence" value="ECO:0007005"/>
    <property type="project" value="MGI"/>
</dbReference>
<dbReference type="GO" id="GO:0005524">
    <property type="term" value="F:ATP binding"/>
    <property type="evidence" value="ECO:0007669"/>
    <property type="project" value="UniProtKB-KW"/>
</dbReference>
<dbReference type="GO" id="GO:0016887">
    <property type="term" value="F:ATP hydrolysis activity"/>
    <property type="evidence" value="ECO:0007669"/>
    <property type="project" value="InterPro"/>
</dbReference>
<dbReference type="CDD" id="cd03221">
    <property type="entry name" value="ABCF_EF-3"/>
    <property type="match status" value="2"/>
</dbReference>
<dbReference type="FunFam" id="3.40.50.300:FF:000467">
    <property type="entry name" value="ATP-binding cassette sub-family F member 2"/>
    <property type="match status" value="1"/>
</dbReference>
<dbReference type="FunFam" id="3.40.50.300:FF:000104">
    <property type="entry name" value="ATP-binding cassette sub-family F member 3"/>
    <property type="match status" value="1"/>
</dbReference>
<dbReference type="Gene3D" id="3.40.50.300">
    <property type="entry name" value="P-loop containing nucleotide triphosphate hydrolases"/>
    <property type="match status" value="2"/>
</dbReference>
<dbReference type="InterPro" id="IPR003593">
    <property type="entry name" value="AAA+_ATPase"/>
</dbReference>
<dbReference type="InterPro" id="IPR032781">
    <property type="entry name" value="ABC_tran_Xtn"/>
</dbReference>
<dbReference type="InterPro" id="IPR003439">
    <property type="entry name" value="ABC_transporter-like_ATP-bd"/>
</dbReference>
<dbReference type="InterPro" id="IPR017871">
    <property type="entry name" value="ABC_transporter-like_CS"/>
</dbReference>
<dbReference type="InterPro" id="IPR050611">
    <property type="entry name" value="ABCF_EF3_subfamily"/>
</dbReference>
<dbReference type="InterPro" id="IPR027417">
    <property type="entry name" value="P-loop_NTPase"/>
</dbReference>
<dbReference type="PANTHER" id="PTHR19211:SF15">
    <property type="entry name" value="ATP-BINDING CASSETTE SUB-FAMILY F MEMBER 2"/>
    <property type="match status" value="1"/>
</dbReference>
<dbReference type="PANTHER" id="PTHR19211">
    <property type="entry name" value="ATP-BINDING TRANSPORT PROTEIN-RELATED"/>
    <property type="match status" value="1"/>
</dbReference>
<dbReference type="Pfam" id="PF00005">
    <property type="entry name" value="ABC_tran"/>
    <property type="match status" value="2"/>
</dbReference>
<dbReference type="Pfam" id="PF12848">
    <property type="entry name" value="ABC_tran_Xtn"/>
    <property type="match status" value="1"/>
</dbReference>
<dbReference type="SMART" id="SM00382">
    <property type="entry name" value="AAA"/>
    <property type="match status" value="2"/>
</dbReference>
<dbReference type="SUPFAM" id="SSF52540">
    <property type="entry name" value="P-loop containing nucleoside triphosphate hydrolases"/>
    <property type="match status" value="2"/>
</dbReference>
<dbReference type="PROSITE" id="PS00211">
    <property type="entry name" value="ABC_TRANSPORTER_1"/>
    <property type="match status" value="1"/>
</dbReference>
<dbReference type="PROSITE" id="PS50893">
    <property type="entry name" value="ABC_TRANSPORTER_2"/>
    <property type="match status" value="2"/>
</dbReference>
<protein>
    <recommendedName>
        <fullName>ATP-binding cassette sub-family F member 2</fullName>
    </recommendedName>
</protein>
<proteinExistence type="evidence at protein level"/>
<sequence>MPSDLAKKKAAKKKEAAKARQRPRKGHEENGDAVTEPQVAEEKIEEANGRETTGDGEVDLLTKELEDFEMKKAAARAVTGVLASHPNSTDVHIINLSLTFHGQELLSDTKLELNSGRRYGLIGLNGIGKSMLLSAIGKREVPIPEHIDIYHLTREMPPSEKTPLQCVMEVDTERAMLEREAERLAHEDAECEKLMELYERLEELDADKAEMRASRILHGLGFTPAMQRKKLKDFSGGWRMRVALARALFIRPFMLLLDEPTNHLDLDACVWLEEELKTFKRILVLVSHSQDFLNGVCTNIIHMHNKKLKYYTGNYDQYVKTRLELEENQMKRFHWEQDQIAHMKNYIARFGHGSAKLARQAQSKEKTLQKMMASGLTERVVSDKTLSFYFPPCGKIPPPVIMVQNVSFKYTKDGPCIYNNLEFGIDLDTRVALVGPNGAGKSTLLKLLTGELLPTDGMIRKHSHVKIGRYHQHLQEQLDLDLSPLEYMMKCYPEIKEKEEMRKIIGRYGLTGKQQVSPIRNLSDGQKCRVCLAWLAWQNPHMLFLDEPTNHLDIETIDALADAINEFEGGMMLVSHDFRLIQQVAQEIWVCEKQTITKWPGDILAYKEHLKSKLVDEEPQLTKRTHNV</sequence>
<organism>
    <name type="scientific">Mus musculus</name>
    <name type="common">Mouse</name>
    <dbReference type="NCBI Taxonomy" id="10090"/>
    <lineage>
        <taxon>Eukaryota</taxon>
        <taxon>Metazoa</taxon>
        <taxon>Chordata</taxon>
        <taxon>Craniata</taxon>
        <taxon>Vertebrata</taxon>
        <taxon>Euteleostomi</taxon>
        <taxon>Mammalia</taxon>
        <taxon>Eutheria</taxon>
        <taxon>Euarchontoglires</taxon>
        <taxon>Glires</taxon>
        <taxon>Rodentia</taxon>
        <taxon>Myomorpha</taxon>
        <taxon>Muroidea</taxon>
        <taxon>Muridae</taxon>
        <taxon>Murinae</taxon>
        <taxon>Mus</taxon>
        <taxon>Mus</taxon>
    </lineage>
</organism>
<comment type="similarity">
    <text evidence="4">Belongs to the ABC transporter superfamily. ABCF family. EF3 subfamily.</text>
</comment>
<comment type="caution">
    <text evidence="4">Lacks transmembrane domains and is probably not involved in transport.</text>
</comment>
<name>ABCF2_MOUSE</name>
<accession>Q99LE6</accession>
<accession>Q3UA24</accession>
<accession>Q8C1S5</accession>
<accession>Q9JL48</accession>
<evidence type="ECO:0000250" key="1">
    <source>
        <dbReference type="UniProtKB" id="Q9UG63"/>
    </source>
</evidence>
<evidence type="ECO:0000255" key="2">
    <source>
        <dbReference type="PROSITE-ProRule" id="PRU00434"/>
    </source>
</evidence>
<evidence type="ECO:0000256" key="3">
    <source>
        <dbReference type="SAM" id="MobiDB-lite"/>
    </source>
</evidence>
<evidence type="ECO:0000305" key="4"/>
<evidence type="ECO:0000312" key="5">
    <source>
        <dbReference type="EMBL" id="AAF31422.1"/>
    </source>
</evidence>
<evidence type="ECO:0000312" key="6">
    <source>
        <dbReference type="EMBL" id="AAH03300.1"/>
    </source>
</evidence>
<evidence type="ECO:0000312" key="7">
    <source>
        <dbReference type="MGI" id="MGI:1351657"/>
    </source>
</evidence>
<reference key="1">
    <citation type="journal article" date="2005" name="Science">
        <title>The transcriptional landscape of the mammalian genome.</title>
        <authorList>
            <person name="Carninci P."/>
            <person name="Kasukawa T."/>
            <person name="Katayama S."/>
            <person name="Gough J."/>
            <person name="Frith M.C."/>
            <person name="Maeda N."/>
            <person name="Oyama R."/>
            <person name="Ravasi T."/>
            <person name="Lenhard B."/>
            <person name="Wells C."/>
            <person name="Kodzius R."/>
            <person name="Shimokawa K."/>
            <person name="Bajic V.B."/>
            <person name="Brenner S.E."/>
            <person name="Batalov S."/>
            <person name="Forrest A.R."/>
            <person name="Zavolan M."/>
            <person name="Davis M.J."/>
            <person name="Wilming L.G."/>
            <person name="Aidinis V."/>
            <person name="Allen J.E."/>
            <person name="Ambesi-Impiombato A."/>
            <person name="Apweiler R."/>
            <person name="Aturaliya R.N."/>
            <person name="Bailey T.L."/>
            <person name="Bansal M."/>
            <person name="Baxter L."/>
            <person name="Beisel K.W."/>
            <person name="Bersano T."/>
            <person name="Bono H."/>
            <person name="Chalk A.M."/>
            <person name="Chiu K.P."/>
            <person name="Choudhary V."/>
            <person name="Christoffels A."/>
            <person name="Clutterbuck D.R."/>
            <person name="Crowe M.L."/>
            <person name="Dalla E."/>
            <person name="Dalrymple B.P."/>
            <person name="de Bono B."/>
            <person name="Della Gatta G."/>
            <person name="di Bernardo D."/>
            <person name="Down T."/>
            <person name="Engstrom P."/>
            <person name="Fagiolini M."/>
            <person name="Faulkner G."/>
            <person name="Fletcher C.F."/>
            <person name="Fukushima T."/>
            <person name="Furuno M."/>
            <person name="Futaki S."/>
            <person name="Gariboldi M."/>
            <person name="Georgii-Hemming P."/>
            <person name="Gingeras T.R."/>
            <person name="Gojobori T."/>
            <person name="Green R.E."/>
            <person name="Gustincich S."/>
            <person name="Harbers M."/>
            <person name="Hayashi Y."/>
            <person name="Hensch T.K."/>
            <person name="Hirokawa N."/>
            <person name="Hill D."/>
            <person name="Huminiecki L."/>
            <person name="Iacono M."/>
            <person name="Ikeo K."/>
            <person name="Iwama A."/>
            <person name="Ishikawa T."/>
            <person name="Jakt M."/>
            <person name="Kanapin A."/>
            <person name="Katoh M."/>
            <person name="Kawasawa Y."/>
            <person name="Kelso J."/>
            <person name="Kitamura H."/>
            <person name="Kitano H."/>
            <person name="Kollias G."/>
            <person name="Krishnan S.P."/>
            <person name="Kruger A."/>
            <person name="Kummerfeld S.K."/>
            <person name="Kurochkin I.V."/>
            <person name="Lareau L.F."/>
            <person name="Lazarevic D."/>
            <person name="Lipovich L."/>
            <person name="Liu J."/>
            <person name="Liuni S."/>
            <person name="McWilliam S."/>
            <person name="Madan Babu M."/>
            <person name="Madera M."/>
            <person name="Marchionni L."/>
            <person name="Matsuda H."/>
            <person name="Matsuzawa S."/>
            <person name="Miki H."/>
            <person name="Mignone F."/>
            <person name="Miyake S."/>
            <person name="Morris K."/>
            <person name="Mottagui-Tabar S."/>
            <person name="Mulder N."/>
            <person name="Nakano N."/>
            <person name="Nakauchi H."/>
            <person name="Ng P."/>
            <person name="Nilsson R."/>
            <person name="Nishiguchi S."/>
            <person name="Nishikawa S."/>
            <person name="Nori F."/>
            <person name="Ohara O."/>
            <person name="Okazaki Y."/>
            <person name="Orlando V."/>
            <person name="Pang K.C."/>
            <person name="Pavan W.J."/>
            <person name="Pavesi G."/>
            <person name="Pesole G."/>
            <person name="Petrovsky N."/>
            <person name="Piazza S."/>
            <person name="Reed J."/>
            <person name="Reid J.F."/>
            <person name="Ring B.Z."/>
            <person name="Ringwald M."/>
            <person name="Rost B."/>
            <person name="Ruan Y."/>
            <person name="Salzberg S.L."/>
            <person name="Sandelin A."/>
            <person name="Schneider C."/>
            <person name="Schoenbach C."/>
            <person name="Sekiguchi K."/>
            <person name="Semple C.A."/>
            <person name="Seno S."/>
            <person name="Sessa L."/>
            <person name="Sheng Y."/>
            <person name="Shibata Y."/>
            <person name="Shimada H."/>
            <person name="Shimada K."/>
            <person name="Silva D."/>
            <person name="Sinclair B."/>
            <person name="Sperling S."/>
            <person name="Stupka E."/>
            <person name="Sugiura K."/>
            <person name="Sultana R."/>
            <person name="Takenaka Y."/>
            <person name="Taki K."/>
            <person name="Tammoja K."/>
            <person name="Tan S.L."/>
            <person name="Tang S."/>
            <person name="Taylor M.S."/>
            <person name="Tegner J."/>
            <person name="Teichmann S.A."/>
            <person name="Ueda H.R."/>
            <person name="van Nimwegen E."/>
            <person name="Verardo R."/>
            <person name="Wei C.L."/>
            <person name="Yagi K."/>
            <person name="Yamanishi H."/>
            <person name="Zabarovsky E."/>
            <person name="Zhu S."/>
            <person name="Zimmer A."/>
            <person name="Hide W."/>
            <person name="Bult C."/>
            <person name="Grimmond S.M."/>
            <person name="Teasdale R.D."/>
            <person name="Liu E.T."/>
            <person name="Brusic V."/>
            <person name="Quackenbush J."/>
            <person name="Wahlestedt C."/>
            <person name="Mattick J.S."/>
            <person name="Hume D.A."/>
            <person name="Kai C."/>
            <person name="Sasaki D."/>
            <person name="Tomaru Y."/>
            <person name="Fukuda S."/>
            <person name="Kanamori-Katayama M."/>
            <person name="Suzuki M."/>
            <person name="Aoki J."/>
            <person name="Arakawa T."/>
            <person name="Iida J."/>
            <person name="Imamura K."/>
            <person name="Itoh M."/>
            <person name="Kato T."/>
            <person name="Kawaji H."/>
            <person name="Kawagashira N."/>
            <person name="Kawashima T."/>
            <person name="Kojima M."/>
            <person name="Kondo S."/>
            <person name="Konno H."/>
            <person name="Nakano K."/>
            <person name="Ninomiya N."/>
            <person name="Nishio T."/>
            <person name="Okada M."/>
            <person name="Plessy C."/>
            <person name="Shibata K."/>
            <person name="Shiraki T."/>
            <person name="Suzuki S."/>
            <person name="Tagami M."/>
            <person name="Waki K."/>
            <person name="Watahiki A."/>
            <person name="Okamura-Oho Y."/>
            <person name="Suzuki H."/>
            <person name="Kawai J."/>
            <person name="Hayashizaki Y."/>
        </authorList>
    </citation>
    <scope>NUCLEOTIDE SEQUENCE [LARGE SCALE MRNA]</scope>
    <source>
        <strain>C57BL/6J</strain>
        <strain>NOD</strain>
        <tissue>Bone marrow</tissue>
        <tissue>Brain</tissue>
        <tissue>Thymus</tissue>
    </source>
</reference>
<reference evidence="6" key="2">
    <citation type="journal article" date="2004" name="Genome Res.">
        <title>The status, quality, and expansion of the NIH full-length cDNA project: the Mammalian Gene Collection (MGC).</title>
        <authorList>
            <consortium name="The MGC Project Team"/>
        </authorList>
    </citation>
    <scope>NUCLEOTIDE SEQUENCE [LARGE SCALE MRNA]</scope>
    <source>
        <strain evidence="6">FVB/N</strain>
        <tissue evidence="6">Mammary gland</tissue>
    </source>
</reference>
<reference evidence="4 5" key="3">
    <citation type="journal article" date="2000" name="Genomics">
        <title>Identification of 18 mouse ABC genes and characterization of the ABC superfamily in Mus musculus.</title>
        <authorList>
            <person name="Schriml L.M."/>
            <person name="Dean M."/>
        </authorList>
    </citation>
    <scope>NUCLEOTIDE SEQUENCE [MRNA] OF 376-628</scope>
    <source>
        <strain evidence="5">C57BL/6J</strain>
    </source>
</reference>
<reference key="4">
    <citation type="journal article" date="2010" name="Cell">
        <title>A tissue-specific atlas of mouse protein phosphorylation and expression.</title>
        <authorList>
            <person name="Huttlin E.L."/>
            <person name="Jedrychowski M.P."/>
            <person name="Elias J.E."/>
            <person name="Goswami T."/>
            <person name="Rad R."/>
            <person name="Beausoleil S.A."/>
            <person name="Villen J."/>
            <person name="Haas W."/>
            <person name="Sowa M.E."/>
            <person name="Gygi S.P."/>
        </authorList>
    </citation>
    <scope>IDENTIFICATION BY MASS SPECTROMETRY [LARGE SCALE ANALYSIS]</scope>
    <source>
        <tissue>Brain</tissue>
        <tissue>Brown adipose tissue</tissue>
        <tissue>Heart</tissue>
        <tissue>Kidney</tissue>
        <tissue>Liver</tissue>
        <tissue>Lung</tissue>
        <tissue>Pancreas</tissue>
        <tissue>Spleen</tissue>
    </source>
</reference>